<reference key="1">
    <citation type="journal article" date="2002" name="Proc. Natl. Acad. Sci. U.S.A.">
        <title>Genome sequence of the hyperthermophilic crenarchaeon Pyrobaculum aerophilum.</title>
        <authorList>
            <person name="Fitz-Gibbon S.T."/>
            <person name="Ladner H."/>
            <person name="Kim U.-J."/>
            <person name="Stetter K.O."/>
            <person name="Simon M.I."/>
            <person name="Miller J.H."/>
        </authorList>
    </citation>
    <scope>NUCLEOTIDE SEQUENCE [LARGE SCALE GENOMIC DNA]</scope>
    <source>
        <strain>ATCC 51768 / DSM 7523 / JCM 9630 / CIP 104966 / NBRC 100827 / IM2</strain>
    </source>
</reference>
<feature type="chain" id="PRO_0000240267" description="Tyrosine--tRNA ligase 2">
    <location>
        <begin position="1"/>
        <end position="316"/>
    </location>
</feature>
<feature type="short sequence motif" description="'KMSKS' region">
    <location>
        <begin position="219"/>
        <end position="223"/>
    </location>
</feature>
<feature type="binding site" evidence="1">
    <location>
        <position position="26"/>
    </location>
    <ligand>
        <name>L-tyrosine</name>
        <dbReference type="ChEBI" id="CHEBI:58315"/>
    </ligand>
</feature>
<feature type="binding site" evidence="1">
    <location>
        <position position="146"/>
    </location>
    <ligand>
        <name>L-tyrosine</name>
        <dbReference type="ChEBI" id="CHEBI:58315"/>
    </ligand>
</feature>
<feature type="binding site" evidence="1">
    <location>
        <position position="150"/>
    </location>
    <ligand>
        <name>L-tyrosine</name>
        <dbReference type="ChEBI" id="CHEBI:58315"/>
    </ligand>
</feature>
<feature type="binding site" evidence="1">
    <location>
        <position position="153"/>
    </location>
    <ligand>
        <name>L-tyrosine</name>
        <dbReference type="ChEBI" id="CHEBI:58315"/>
    </ligand>
</feature>
<feature type="binding site" evidence="1">
    <location>
        <position position="168"/>
    </location>
    <ligand>
        <name>L-tyrosine</name>
        <dbReference type="ChEBI" id="CHEBI:58315"/>
    </ligand>
</feature>
<feature type="binding site" evidence="1">
    <location>
        <position position="222"/>
    </location>
    <ligand>
        <name>ATP</name>
        <dbReference type="ChEBI" id="CHEBI:30616"/>
    </ligand>
</feature>
<proteinExistence type="inferred from homology"/>
<name>SYY2_PYRAE</name>
<evidence type="ECO:0000255" key="1">
    <source>
        <dbReference type="HAMAP-Rule" id="MF_02009"/>
    </source>
</evidence>
<sequence length="316" mass="36004">MERLLMNVEEVVTREEFLRLKGGSAYLGFEPLWPIHIGWLIWAYKLAELKEAGFDVIVLVATWHAWINDKGSIEELRAHGERVRAVLDRIGKFKYVYGDDVAKDPKYWELVVKIAKETSLARVKRATPVMGRRAEEVELDFSKLMYPLMQVADIFYLGVDVAVGGMDQRRAHMLARDVAEKLGLKKPIALHTPIITSLSGTGRMEGTHREIDEVYAMYKMSKSKPQSAILITDSEEDVRKKIWAAYCPPRETKFNPVFEIAAYLLIPYHGPLEIKGRRYEEGNALERDYREGVVTPQELKEAVASALVGLLSKLKL</sequence>
<accession>Q8ZW77</accession>
<comment type="function">
    <text evidence="1">Catalyzes the attachment of tyrosine to tRNA(Tyr) in a two-step reaction: tyrosine is first activated by ATP to form Tyr-AMP and then transferred to the acceptor end of tRNA(Tyr).</text>
</comment>
<comment type="catalytic activity">
    <reaction evidence="1">
        <text>tRNA(Tyr) + L-tyrosine + ATP = L-tyrosyl-tRNA(Tyr) + AMP + diphosphate + H(+)</text>
        <dbReference type="Rhea" id="RHEA:10220"/>
        <dbReference type="Rhea" id="RHEA-COMP:9706"/>
        <dbReference type="Rhea" id="RHEA-COMP:9707"/>
        <dbReference type="ChEBI" id="CHEBI:15378"/>
        <dbReference type="ChEBI" id="CHEBI:30616"/>
        <dbReference type="ChEBI" id="CHEBI:33019"/>
        <dbReference type="ChEBI" id="CHEBI:58315"/>
        <dbReference type="ChEBI" id="CHEBI:78442"/>
        <dbReference type="ChEBI" id="CHEBI:78536"/>
        <dbReference type="ChEBI" id="CHEBI:456215"/>
        <dbReference type="EC" id="6.1.1.1"/>
    </reaction>
</comment>
<comment type="subunit">
    <text evidence="1">Homodimer.</text>
</comment>
<comment type="subcellular location">
    <subcellularLocation>
        <location evidence="1">Cytoplasm</location>
    </subcellularLocation>
</comment>
<comment type="similarity">
    <text evidence="1">Belongs to the class-I aminoacyl-tRNA synthetase family. TyrS type 4 subfamily.</text>
</comment>
<protein>
    <recommendedName>
        <fullName evidence="1">Tyrosine--tRNA ligase 2</fullName>
        <ecNumber evidence="1">6.1.1.1</ecNumber>
    </recommendedName>
    <alternativeName>
        <fullName evidence="1">Tyrosyl-tRNA synthetase 2</fullName>
        <shortName evidence="1">TyrRS 2</shortName>
    </alternativeName>
</protein>
<keyword id="KW-0030">Aminoacyl-tRNA synthetase</keyword>
<keyword id="KW-0067">ATP-binding</keyword>
<keyword id="KW-0963">Cytoplasm</keyword>
<keyword id="KW-0436">Ligase</keyword>
<keyword id="KW-0547">Nucleotide-binding</keyword>
<keyword id="KW-0648">Protein biosynthesis</keyword>
<keyword id="KW-1185">Reference proteome</keyword>
<gene>
    <name evidence="1" type="primary">tyrS2</name>
    <name type="ordered locus">PAE1931</name>
</gene>
<dbReference type="EC" id="6.1.1.1" evidence="1"/>
<dbReference type="EMBL" id="AE009441">
    <property type="protein sequence ID" value="AAL63825.1"/>
    <property type="molecule type" value="Genomic_DNA"/>
</dbReference>
<dbReference type="RefSeq" id="WP_011008296.1">
    <property type="nucleotide sequence ID" value="NC_003364.1"/>
</dbReference>
<dbReference type="SMR" id="Q8ZW77"/>
<dbReference type="FunCoup" id="Q8ZW77">
    <property type="interactions" value="211"/>
</dbReference>
<dbReference type="STRING" id="178306.PAE1931"/>
<dbReference type="EnsemblBacteria" id="AAL63825">
    <property type="protein sequence ID" value="AAL63825"/>
    <property type="gene ID" value="PAE1931"/>
</dbReference>
<dbReference type="GeneID" id="1464148"/>
<dbReference type="KEGG" id="pai:PAE1931"/>
<dbReference type="PATRIC" id="fig|178306.9.peg.1429"/>
<dbReference type="eggNOG" id="arCOG01886">
    <property type="taxonomic scope" value="Archaea"/>
</dbReference>
<dbReference type="HOGENOM" id="CLU_035267_1_1_2"/>
<dbReference type="InParanoid" id="Q8ZW77"/>
<dbReference type="Proteomes" id="UP000002439">
    <property type="component" value="Chromosome"/>
</dbReference>
<dbReference type="GO" id="GO:0005737">
    <property type="term" value="C:cytoplasm"/>
    <property type="evidence" value="ECO:0000318"/>
    <property type="project" value="GO_Central"/>
</dbReference>
<dbReference type="GO" id="GO:0005524">
    <property type="term" value="F:ATP binding"/>
    <property type="evidence" value="ECO:0007669"/>
    <property type="project" value="UniProtKB-UniRule"/>
</dbReference>
<dbReference type="GO" id="GO:0004831">
    <property type="term" value="F:tyrosine-tRNA ligase activity"/>
    <property type="evidence" value="ECO:0000318"/>
    <property type="project" value="GO_Central"/>
</dbReference>
<dbReference type="GO" id="GO:0006437">
    <property type="term" value="P:tyrosyl-tRNA aminoacylation"/>
    <property type="evidence" value="ECO:0000318"/>
    <property type="project" value="GO_Central"/>
</dbReference>
<dbReference type="Gene3D" id="3.40.50.620">
    <property type="entry name" value="HUPs"/>
    <property type="match status" value="1"/>
</dbReference>
<dbReference type="Gene3D" id="1.10.240.10">
    <property type="entry name" value="Tyrosyl-Transfer RNA Synthetase"/>
    <property type="match status" value="1"/>
</dbReference>
<dbReference type="HAMAP" id="MF_02009">
    <property type="entry name" value="Tyr_tRNA_synth_type4"/>
    <property type="match status" value="1"/>
</dbReference>
<dbReference type="InterPro" id="IPR002305">
    <property type="entry name" value="aa-tRNA-synth_Ic"/>
</dbReference>
<dbReference type="InterPro" id="IPR014729">
    <property type="entry name" value="Rossmann-like_a/b/a_fold"/>
</dbReference>
<dbReference type="InterPro" id="IPR002307">
    <property type="entry name" value="Tyr-tRNA-ligase"/>
</dbReference>
<dbReference type="InterPro" id="IPR023678">
    <property type="entry name" value="Tyr-tRNA-ligase_4"/>
</dbReference>
<dbReference type="InterPro" id="IPR023617">
    <property type="entry name" value="Tyr-tRNA-ligase_arc/euk-type"/>
</dbReference>
<dbReference type="InterPro" id="IPR050489">
    <property type="entry name" value="Tyr-tRNA_synthase"/>
</dbReference>
<dbReference type="NCBIfam" id="NF006330">
    <property type="entry name" value="PRK08560.1"/>
    <property type="match status" value="1"/>
</dbReference>
<dbReference type="NCBIfam" id="TIGR00234">
    <property type="entry name" value="tyrS"/>
    <property type="match status" value="1"/>
</dbReference>
<dbReference type="PANTHER" id="PTHR46264:SF4">
    <property type="entry name" value="TYROSINE--TRNA LIGASE, CYTOPLASMIC"/>
    <property type="match status" value="1"/>
</dbReference>
<dbReference type="PANTHER" id="PTHR46264">
    <property type="entry name" value="TYROSINE-TRNA LIGASE"/>
    <property type="match status" value="1"/>
</dbReference>
<dbReference type="Pfam" id="PF00579">
    <property type="entry name" value="tRNA-synt_1b"/>
    <property type="match status" value="1"/>
</dbReference>
<dbReference type="PIRSF" id="PIRSF006588">
    <property type="entry name" value="TyrRS_arch_euk"/>
    <property type="match status" value="1"/>
</dbReference>
<dbReference type="PRINTS" id="PR01040">
    <property type="entry name" value="TRNASYNTHTYR"/>
</dbReference>
<dbReference type="SUPFAM" id="SSF52374">
    <property type="entry name" value="Nucleotidylyl transferase"/>
    <property type="match status" value="1"/>
</dbReference>
<organism>
    <name type="scientific">Pyrobaculum aerophilum (strain ATCC 51768 / DSM 7523 / JCM 9630 / CIP 104966 / NBRC 100827 / IM2)</name>
    <dbReference type="NCBI Taxonomy" id="178306"/>
    <lineage>
        <taxon>Archaea</taxon>
        <taxon>Thermoproteota</taxon>
        <taxon>Thermoprotei</taxon>
        <taxon>Thermoproteales</taxon>
        <taxon>Thermoproteaceae</taxon>
        <taxon>Pyrobaculum</taxon>
    </lineage>
</organism>